<dbReference type="EC" id="6.1.1.6"/>
<dbReference type="EMBL" id="AE001363">
    <property type="protein sequence ID" value="AAD19069.1"/>
    <property type="molecule type" value="Genomic_DNA"/>
</dbReference>
<dbReference type="EMBL" id="AE002161">
    <property type="protein sequence ID" value="AAF38715.1"/>
    <property type="molecule type" value="Genomic_DNA"/>
</dbReference>
<dbReference type="EMBL" id="BA000008">
    <property type="protein sequence ID" value="BAA99139.1"/>
    <property type="molecule type" value="Genomic_DNA"/>
</dbReference>
<dbReference type="EMBL" id="AE009440">
    <property type="protein sequence ID" value="AAP98894.1"/>
    <property type="molecule type" value="Genomic_DNA"/>
</dbReference>
<dbReference type="PIR" id="A86607">
    <property type="entry name" value="A86607"/>
</dbReference>
<dbReference type="PIR" id="E72016">
    <property type="entry name" value="E72016"/>
</dbReference>
<dbReference type="RefSeq" id="NP_225126.1">
    <property type="nucleotide sequence ID" value="NC_000922.1"/>
</dbReference>
<dbReference type="RefSeq" id="WP_010883566.1">
    <property type="nucleotide sequence ID" value="NZ_LN847257.1"/>
</dbReference>
<dbReference type="SMR" id="Q9Z6X5"/>
<dbReference type="STRING" id="406984.CPK_ORF00345"/>
<dbReference type="GeneID" id="45050987"/>
<dbReference type="KEGG" id="cpa:CP_0932"/>
<dbReference type="KEGG" id="cpj:lysS"/>
<dbReference type="KEGG" id="cpn:CPn_0931"/>
<dbReference type="KEGG" id="cpt:CpB0965"/>
<dbReference type="PATRIC" id="fig|115713.3.peg.1017"/>
<dbReference type="eggNOG" id="COG1190">
    <property type="taxonomic scope" value="Bacteria"/>
</dbReference>
<dbReference type="HOGENOM" id="CLU_008255_6_0_0"/>
<dbReference type="OrthoDB" id="9802326at2"/>
<dbReference type="Proteomes" id="UP000000583">
    <property type="component" value="Chromosome"/>
</dbReference>
<dbReference type="Proteomes" id="UP000000801">
    <property type="component" value="Chromosome"/>
</dbReference>
<dbReference type="GO" id="GO:0005829">
    <property type="term" value="C:cytosol"/>
    <property type="evidence" value="ECO:0007669"/>
    <property type="project" value="TreeGrafter"/>
</dbReference>
<dbReference type="GO" id="GO:0005524">
    <property type="term" value="F:ATP binding"/>
    <property type="evidence" value="ECO:0007669"/>
    <property type="project" value="UniProtKB-UniRule"/>
</dbReference>
<dbReference type="GO" id="GO:0004824">
    <property type="term" value="F:lysine-tRNA ligase activity"/>
    <property type="evidence" value="ECO:0007669"/>
    <property type="project" value="UniProtKB-UniRule"/>
</dbReference>
<dbReference type="GO" id="GO:0000287">
    <property type="term" value="F:magnesium ion binding"/>
    <property type="evidence" value="ECO:0007669"/>
    <property type="project" value="UniProtKB-UniRule"/>
</dbReference>
<dbReference type="GO" id="GO:0000049">
    <property type="term" value="F:tRNA binding"/>
    <property type="evidence" value="ECO:0007669"/>
    <property type="project" value="TreeGrafter"/>
</dbReference>
<dbReference type="GO" id="GO:0006430">
    <property type="term" value="P:lysyl-tRNA aminoacylation"/>
    <property type="evidence" value="ECO:0007669"/>
    <property type="project" value="UniProtKB-UniRule"/>
</dbReference>
<dbReference type="CDD" id="cd04322">
    <property type="entry name" value="LysRS_N"/>
    <property type="match status" value="1"/>
</dbReference>
<dbReference type="Gene3D" id="3.30.930.10">
    <property type="entry name" value="Bira Bifunctional Protein, Domain 2"/>
    <property type="match status" value="1"/>
</dbReference>
<dbReference type="Gene3D" id="2.40.50.140">
    <property type="entry name" value="Nucleic acid-binding proteins"/>
    <property type="match status" value="1"/>
</dbReference>
<dbReference type="HAMAP" id="MF_00252">
    <property type="entry name" value="Lys_tRNA_synth_class2"/>
    <property type="match status" value="1"/>
</dbReference>
<dbReference type="InterPro" id="IPR004364">
    <property type="entry name" value="Aa-tRNA-synt_II"/>
</dbReference>
<dbReference type="InterPro" id="IPR006195">
    <property type="entry name" value="aa-tRNA-synth_II"/>
</dbReference>
<dbReference type="InterPro" id="IPR045864">
    <property type="entry name" value="aa-tRNA-synth_II/BPL/LPL"/>
</dbReference>
<dbReference type="InterPro" id="IPR002313">
    <property type="entry name" value="Lys-tRNA-ligase_II"/>
</dbReference>
<dbReference type="InterPro" id="IPR044136">
    <property type="entry name" value="Lys-tRNA-ligase_II_N"/>
</dbReference>
<dbReference type="InterPro" id="IPR018149">
    <property type="entry name" value="Lys-tRNA-synth_II_C"/>
</dbReference>
<dbReference type="InterPro" id="IPR012340">
    <property type="entry name" value="NA-bd_OB-fold"/>
</dbReference>
<dbReference type="InterPro" id="IPR004365">
    <property type="entry name" value="NA-bd_OB_tRNA"/>
</dbReference>
<dbReference type="NCBIfam" id="TIGR00499">
    <property type="entry name" value="lysS_bact"/>
    <property type="match status" value="1"/>
</dbReference>
<dbReference type="NCBIfam" id="NF001756">
    <property type="entry name" value="PRK00484.1"/>
    <property type="match status" value="1"/>
</dbReference>
<dbReference type="PANTHER" id="PTHR42918:SF15">
    <property type="entry name" value="LYSINE--TRNA LIGASE, CHLOROPLASTIC_MITOCHONDRIAL"/>
    <property type="match status" value="1"/>
</dbReference>
<dbReference type="PANTHER" id="PTHR42918">
    <property type="entry name" value="LYSYL-TRNA SYNTHETASE"/>
    <property type="match status" value="1"/>
</dbReference>
<dbReference type="Pfam" id="PF00152">
    <property type="entry name" value="tRNA-synt_2"/>
    <property type="match status" value="1"/>
</dbReference>
<dbReference type="Pfam" id="PF01336">
    <property type="entry name" value="tRNA_anti-codon"/>
    <property type="match status" value="1"/>
</dbReference>
<dbReference type="PRINTS" id="PR00982">
    <property type="entry name" value="TRNASYNTHLYS"/>
</dbReference>
<dbReference type="SUPFAM" id="SSF55681">
    <property type="entry name" value="Class II aaRS and biotin synthetases"/>
    <property type="match status" value="1"/>
</dbReference>
<dbReference type="SUPFAM" id="SSF50249">
    <property type="entry name" value="Nucleic acid-binding proteins"/>
    <property type="match status" value="1"/>
</dbReference>
<dbReference type="PROSITE" id="PS50862">
    <property type="entry name" value="AA_TRNA_LIGASE_II"/>
    <property type="match status" value="1"/>
</dbReference>
<comment type="catalytic activity">
    <reaction>
        <text>tRNA(Lys) + L-lysine + ATP = L-lysyl-tRNA(Lys) + AMP + diphosphate</text>
        <dbReference type="Rhea" id="RHEA:20792"/>
        <dbReference type="Rhea" id="RHEA-COMP:9696"/>
        <dbReference type="Rhea" id="RHEA-COMP:9697"/>
        <dbReference type="ChEBI" id="CHEBI:30616"/>
        <dbReference type="ChEBI" id="CHEBI:32551"/>
        <dbReference type="ChEBI" id="CHEBI:33019"/>
        <dbReference type="ChEBI" id="CHEBI:78442"/>
        <dbReference type="ChEBI" id="CHEBI:78529"/>
        <dbReference type="ChEBI" id="CHEBI:456215"/>
        <dbReference type="EC" id="6.1.1.6"/>
    </reaction>
</comment>
<comment type="cofactor">
    <cofactor evidence="1">
        <name>Mg(2+)</name>
        <dbReference type="ChEBI" id="CHEBI:18420"/>
    </cofactor>
    <text evidence="1">Binds 3 Mg(2+) ions per subunit.</text>
</comment>
<comment type="subunit">
    <text evidence="1">Homodimer.</text>
</comment>
<comment type="subcellular location">
    <subcellularLocation>
        <location evidence="1">Cytoplasm</location>
    </subcellularLocation>
</comment>
<comment type="similarity">
    <text evidence="2">Belongs to the class-II aminoacyl-tRNA synthetase family.</text>
</comment>
<name>SYK_CHLPN</name>
<proteinExistence type="inferred from homology"/>
<keyword id="KW-0030">Aminoacyl-tRNA synthetase</keyword>
<keyword id="KW-0067">ATP-binding</keyword>
<keyword id="KW-0963">Cytoplasm</keyword>
<keyword id="KW-0436">Ligase</keyword>
<keyword id="KW-0460">Magnesium</keyword>
<keyword id="KW-0479">Metal-binding</keyword>
<keyword id="KW-0547">Nucleotide-binding</keyword>
<keyword id="KW-0648">Protein biosynthesis</keyword>
<feature type="chain" id="PRO_0000152613" description="Lysine--tRNA ligase">
    <location>
        <begin position="1"/>
        <end position="527"/>
    </location>
</feature>
<feature type="binding site" evidence="1">
    <location>
        <position position="431"/>
    </location>
    <ligand>
        <name>Mg(2+)</name>
        <dbReference type="ChEBI" id="CHEBI:18420"/>
        <label>1</label>
    </ligand>
</feature>
<feature type="binding site" evidence="1">
    <location>
        <position position="438"/>
    </location>
    <ligand>
        <name>Mg(2+)</name>
        <dbReference type="ChEBI" id="CHEBI:18420"/>
        <label>1</label>
    </ligand>
</feature>
<feature type="binding site" evidence="1">
    <location>
        <position position="438"/>
    </location>
    <ligand>
        <name>Mg(2+)</name>
        <dbReference type="ChEBI" id="CHEBI:18420"/>
        <label>2</label>
    </ligand>
</feature>
<feature type="sequence conflict" description="In Ref. 3; BAA99139." evidence="2" ref="3">
    <original>M</original>
    <variation>T</variation>
    <location>
        <position position="242"/>
    </location>
</feature>
<sequence>MTARAEYLDHEDFLYRSHKLQELSELGVVLYPYEFPGVFSCEDIKKTFASQELGNSEAAMSRSTPRVRFAGRLVLFRAMGKNAFGQILDHNQTIQVMFNREFTSVHGLSEDAEITPIKFIEKKLDLGDILGIDGYLFFTHSGELTVLVETVTLLCKSLLSLPDKHAGLSDKEVRYRKRWLDLISSREVSDTFVKRSYIIKLIRNYMDAHGFLEVETPILQNIYGGAEAKPFTTTMEALHSEMFLRISLEIALKKILVGGAPRIYELGKVFRNEGIDRTHNPEFTMIEAYAAYMDYKEVMVFVENLVEHLVRAVNHDNTSLVYSYWKHGPQEVDFKAPWIRMTMKESIATYAGIDVDVHSDQKLKEILKKKTTFPETAFATASRGMLIAALFDELVSDNLIAPHHITDHPVETTPLCKTLRSGDTAFVERFESFCLGKELCNAYSELNDPIRQRELLEQQHTKKELLPDSECHPIDEEFLEALCQGMPPAGGFGIGVDRLVMILTNAASIRDVLYFPVMRRFDAEKTN</sequence>
<evidence type="ECO:0000250" key="1"/>
<evidence type="ECO:0000305" key="2"/>
<organism>
    <name type="scientific">Chlamydia pneumoniae</name>
    <name type="common">Chlamydophila pneumoniae</name>
    <dbReference type="NCBI Taxonomy" id="83558"/>
    <lineage>
        <taxon>Bacteria</taxon>
        <taxon>Pseudomonadati</taxon>
        <taxon>Chlamydiota</taxon>
        <taxon>Chlamydiia</taxon>
        <taxon>Chlamydiales</taxon>
        <taxon>Chlamydiaceae</taxon>
        <taxon>Chlamydia/Chlamydophila group</taxon>
        <taxon>Chlamydia</taxon>
    </lineage>
</organism>
<gene>
    <name type="primary">lysS</name>
    <name type="ordered locus">CPn_0931</name>
    <name type="ordered locus">CP_0932</name>
    <name type="ordered locus">CpB0965</name>
</gene>
<protein>
    <recommendedName>
        <fullName>Lysine--tRNA ligase</fullName>
        <ecNumber>6.1.1.6</ecNumber>
    </recommendedName>
    <alternativeName>
        <fullName>Lysyl-tRNA synthetase</fullName>
        <shortName>LysRS</shortName>
    </alternativeName>
</protein>
<reference key="1">
    <citation type="journal article" date="1999" name="Nat. Genet.">
        <title>Comparative genomes of Chlamydia pneumoniae and C. trachomatis.</title>
        <authorList>
            <person name="Kalman S."/>
            <person name="Mitchell W.P."/>
            <person name="Marathe R."/>
            <person name="Lammel C.J."/>
            <person name="Fan J."/>
            <person name="Hyman R.W."/>
            <person name="Olinger L."/>
            <person name="Grimwood J."/>
            <person name="Davis R.W."/>
            <person name="Stephens R.S."/>
        </authorList>
    </citation>
    <scope>NUCLEOTIDE SEQUENCE [LARGE SCALE GENOMIC DNA]</scope>
    <source>
        <strain>CWL029</strain>
    </source>
</reference>
<reference key="2">
    <citation type="journal article" date="2000" name="Nucleic Acids Res.">
        <title>Genome sequences of Chlamydia trachomatis MoPn and Chlamydia pneumoniae AR39.</title>
        <authorList>
            <person name="Read T.D."/>
            <person name="Brunham R.C."/>
            <person name="Shen C."/>
            <person name="Gill S.R."/>
            <person name="Heidelberg J.F."/>
            <person name="White O."/>
            <person name="Hickey E.K."/>
            <person name="Peterson J.D."/>
            <person name="Utterback T.R."/>
            <person name="Berry K.J."/>
            <person name="Bass S."/>
            <person name="Linher K.D."/>
            <person name="Weidman J.F."/>
            <person name="Khouri H.M."/>
            <person name="Craven B."/>
            <person name="Bowman C."/>
            <person name="Dodson R.J."/>
            <person name="Gwinn M.L."/>
            <person name="Nelson W.C."/>
            <person name="DeBoy R.T."/>
            <person name="Kolonay J.F."/>
            <person name="McClarty G."/>
            <person name="Salzberg S.L."/>
            <person name="Eisen J.A."/>
            <person name="Fraser C.M."/>
        </authorList>
    </citation>
    <scope>NUCLEOTIDE SEQUENCE [LARGE SCALE GENOMIC DNA]</scope>
    <source>
        <strain>AR39</strain>
    </source>
</reference>
<reference key="3">
    <citation type="journal article" date="2000" name="Nucleic Acids Res.">
        <title>Comparison of whole genome sequences of Chlamydia pneumoniae J138 from Japan and CWL029 from USA.</title>
        <authorList>
            <person name="Shirai M."/>
            <person name="Hirakawa H."/>
            <person name="Kimoto M."/>
            <person name="Tabuchi M."/>
            <person name="Kishi F."/>
            <person name="Ouchi K."/>
            <person name="Shiba T."/>
            <person name="Ishii K."/>
            <person name="Hattori M."/>
            <person name="Kuhara S."/>
            <person name="Nakazawa T."/>
        </authorList>
    </citation>
    <scope>NUCLEOTIDE SEQUENCE [LARGE SCALE GENOMIC DNA]</scope>
    <source>
        <strain>J138</strain>
    </source>
</reference>
<reference key="4">
    <citation type="submission" date="2002-05" db="EMBL/GenBank/DDBJ databases">
        <title>The genome sequence of Chlamydia pneumoniae TW183 and comparison with other Chlamydia strains based on whole genome sequence analysis.</title>
        <authorList>
            <person name="Geng M.M."/>
            <person name="Schuhmacher A."/>
            <person name="Muehldorfer I."/>
            <person name="Bensch K.W."/>
            <person name="Schaefer K.P."/>
            <person name="Schneider S."/>
            <person name="Pohl T."/>
            <person name="Essig A."/>
            <person name="Marre R."/>
            <person name="Melchers K."/>
        </authorList>
    </citation>
    <scope>NUCLEOTIDE SEQUENCE [LARGE SCALE GENOMIC DNA]</scope>
    <source>
        <strain>TW-183</strain>
    </source>
</reference>
<accession>Q9Z6X5</accession>
<accession>Q9JS88</accession>